<proteinExistence type="evidence at protein level"/>
<feature type="chain" id="PRO_0000076044" description="C-terminal-binding protein 2">
    <location>
        <begin position="1"/>
        <end position="445"/>
    </location>
</feature>
<feature type="region of interest" description="Disordered" evidence="2">
    <location>
        <begin position="414"/>
        <end position="445"/>
    </location>
</feature>
<feature type="compositionally biased region" description="Basic and acidic residues" evidence="2">
    <location>
        <begin position="434"/>
        <end position="445"/>
    </location>
</feature>
<feature type="active site" evidence="1">
    <location>
        <position position="272"/>
    </location>
</feature>
<feature type="active site" evidence="1">
    <location>
        <position position="301"/>
    </location>
</feature>
<feature type="active site" description="Proton donor" evidence="1">
    <location>
        <position position="321"/>
    </location>
</feature>
<feature type="binding site" evidence="1">
    <location>
        <position position="106"/>
    </location>
    <ligand>
        <name>NAD(+)</name>
        <dbReference type="ChEBI" id="CHEBI:57540"/>
    </ligand>
</feature>
<feature type="binding site" evidence="8">
    <location>
        <begin position="186"/>
        <end position="191"/>
    </location>
    <ligand>
        <name>NAD(+)</name>
        <dbReference type="ChEBI" id="CHEBI:57540"/>
    </ligand>
</feature>
<feature type="binding site" evidence="8">
    <location>
        <position position="210"/>
    </location>
    <ligand>
        <name>NAD(+)</name>
        <dbReference type="ChEBI" id="CHEBI:57540"/>
    </ligand>
</feature>
<feature type="binding site" evidence="8">
    <location>
        <begin position="243"/>
        <end position="249"/>
    </location>
    <ligand>
        <name>NAD(+)</name>
        <dbReference type="ChEBI" id="CHEBI:57540"/>
    </ligand>
</feature>
<feature type="binding site" evidence="8">
    <location>
        <begin position="270"/>
        <end position="272"/>
    </location>
    <ligand>
        <name>NAD(+)</name>
        <dbReference type="ChEBI" id="CHEBI:57540"/>
    </ligand>
</feature>
<feature type="binding site" evidence="8">
    <location>
        <position position="296"/>
    </location>
    <ligand>
        <name>NAD(+)</name>
        <dbReference type="ChEBI" id="CHEBI:57540"/>
    </ligand>
</feature>
<feature type="binding site" evidence="8">
    <location>
        <begin position="321"/>
        <end position="324"/>
    </location>
    <ligand>
        <name>NAD(+)</name>
        <dbReference type="ChEBI" id="CHEBI:57540"/>
    </ligand>
</feature>
<feature type="modified residue" description="Asymmetric dimethylarginine" evidence="11">
    <location>
        <position position="22"/>
    </location>
</feature>
<feature type="modified residue" description="Phosphoserine" evidence="12">
    <location>
        <position position="428"/>
    </location>
</feature>
<feature type="splice variant" id="VSP_027615" description="In isoform 2." evidence="9">
    <original>MALVDKHKVKRQRLDRICEG</original>
    <variation>MPVPSRHINIGRSQSWDAAGWYEGPWENAESLRPLGRRSSLTYGTAEGTWFEPNHRPQDAALPVAAEPYLYREAVYNSVAARKGSTPDFTFYDSRQAVMSGRSPLLPREYYSDPSGAARVPKEPPLYRDPGVSRPVPSYGVLGSRTSWDPMQGRSPALQDAGHLYRDPGGKMIPQGRQTQSRAASPGRYGREQPDTRYGAEVPAYPLSQVFSDISERPIDPAPARQVAPTCLVVDPSSAAAPEGSTGVAPGALNRGYGPARESIPSKMAYETYEADLSTFQGPGGKRTVLPEFLAFLRAEGLAEATLGALLQQGFDSPAVLATLEDADIKSVAPNLGQARVLSRLANSCRTEMQLRRQDRGGPLPRARSSSFSHRSELLHGDLASLGAAAPLQTASPRAGDPARRPSSAPSQHLLETAATYSAPGVGTHAPHFPSNSGYSSPTPCALTARLSPTYPLQAGVALTNPGPSNPLHPGPRTAYSTAYTVPMELLKRERNVAASPLPSPHGSPQVLRKPGAPLGPSTLPPASQSLHTPHSPYQKVARRTGAPIIVSTMLAPEPS</variation>
    <location>
        <begin position="1"/>
        <end position="20"/>
    </location>
</feature>
<feature type="splice variant" id="VSP_058946" description="In isoform 3.">
    <original>MALVDKHKVKRQRLDRICE</original>
    <variation>MRPGLPGPTGLCAQTSSRGQKSVLKQKESCGIWQLYHFLSRKQEPRWEPCVSGSSSGDGAVADLADELRGYPALCCTLPVHSYRSWA</variation>
    <location>
        <begin position="1"/>
        <end position="19"/>
    </location>
</feature>
<feature type="sequence conflict" description="In Ref. 2; AAG45951." evidence="10" ref="2">
    <original>L</original>
    <variation>F</variation>
    <location>
        <position position="87"/>
    </location>
</feature>
<feature type="sequence conflict" description="In Ref. 2; AAG45951." evidence="10" ref="2">
    <original>T</original>
    <variation>N</variation>
    <location>
        <position position="88"/>
    </location>
</feature>
<feature type="sequence conflict" description="In Ref. 2; AAG45951." evidence="10" ref="2">
    <original>D</original>
    <variation>N</variation>
    <location>
        <position position="112"/>
    </location>
</feature>
<feature type="sequence conflict" description="In Ref. 9; AAH37900." evidence="10" ref="9">
    <original>G</original>
    <variation>R</variation>
    <location>
        <position position="292"/>
    </location>
</feature>
<feature type="sequence conflict" description="In Ref. 9; AAH47018." evidence="10" ref="9">
    <original>I</original>
    <variation>T</variation>
    <location>
        <position position="411"/>
    </location>
</feature>
<feature type="strand" evidence="13">
    <location>
        <begin position="35"/>
        <end position="38"/>
    </location>
</feature>
<feature type="helix" evidence="13">
    <location>
        <begin position="47"/>
        <end position="51"/>
    </location>
</feature>
<feature type="turn" evidence="13">
    <location>
        <begin position="52"/>
        <end position="54"/>
    </location>
</feature>
<feature type="strand" evidence="13">
    <location>
        <begin position="56"/>
        <end position="59"/>
    </location>
</feature>
<feature type="helix" evidence="13">
    <location>
        <begin position="65"/>
        <end position="67"/>
    </location>
</feature>
<feature type="helix" evidence="13">
    <location>
        <begin position="70"/>
        <end position="75"/>
    </location>
</feature>
<feature type="strand" evidence="13">
    <location>
        <begin position="76"/>
        <end position="81"/>
    </location>
</feature>
<feature type="strand" evidence="13">
    <location>
        <begin position="83"/>
        <end position="85"/>
    </location>
</feature>
<feature type="helix" evidence="13">
    <location>
        <begin position="89"/>
        <end position="93"/>
    </location>
</feature>
<feature type="strand" evidence="13">
    <location>
        <begin position="100"/>
        <end position="106"/>
    </location>
</feature>
<feature type="helix" evidence="13">
    <location>
        <begin position="113"/>
        <end position="118"/>
    </location>
</feature>
<feature type="strand" evidence="13">
    <location>
        <begin position="122"/>
        <end position="124"/>
    </location>
</feature>
<feature type="strand" evidence="13">
    <location>
        <begin position="128"/>
        <end position="130"/>
    </location>
</feature>
<feature type="helix" evidence="13">
    <location>
        <begin position="131"/>
        <end position="147"/>
    </location>
</feature>
<feature type="helix" evidence="13">
    <location>
        <begin position="149"/>
        <end position="157"/>
    </location>
</feature>
<feature type="helix" evidence="13">
    <location>
        <begin position="165"/>
        <end position="171"/>
    </location>
</feature>
<feature type="turn" evidence="13">
    <location>
        <begin position="172"/>
        <end position="174"/>
    </location>
</feature>
<feature type="strand" evidence="13">
    <location>
        <begin position="182"/>
        <end position="186"/>
    </location>
</feature>
<feature type="helix" evidence="13">
    <location>
        <begin position="190"/>
        <end position="199"/>
    </location>
</feature>
<feature type="helix" evidence="13">
    <location>
        <begin position="200"/>
        <end position="202"/>
    </location>
</feature>
<feature type="strand" evidence="13">
    <location>
        <begin position="205"/>
        <end position="209"/>
    </location>
</feature>
<feature type="helix" evidence="13">
    <location>
        <begin position="217"/>
        <end position="220"/>
    </location>
</feature>
<feature type="helix" evidence="13">
    <location>
        <begin position="229"/>
        <end position="235"/>
    </location>
</feature>
<feature type="strand" evidence="13">
    <location>
        <begin position="237"/>
        <end position="241"/>
    </location>
</feature>
<feature type="helix" evidence="13">
    <location>
        <begin position="255"/>
        <end position="258"/>
    </location>
</feature>
<feature type="strand" evidence="13">
    <location>
        <begin position="265"/>
        <end position="269"/>
    </location>
</feature>
<feature type="helix" evidence="13">
    <location>
        <begin position="273"/>
        <end position="275"/>
    </location>
</feature>
<feature type="helix" evidence="13">
    <location>
        <begin position="278"/>
        <end position="286"/>
    </location>
</feature>
<feature type="strand" evidence="13">
    <location>
        <begin position="289"/>
        <end position="296"/>
    </location>
</feature>
<feature type="strand" evidence="13">
    <location>
        <begin position="299"/>
        <end position="302"/>
    </location>
</feature>
<feature type="turn" evidence="13">
    <location>
        <begin position="309"/>
        <end position="312"/>
    </location>
</feature>
<feature type="strand" evidence="13">
    <location>
        <begin position="314"/>
        <end position="318"/>
    </location>
</feature>
<feature type="helix" evidence="13">
    <location>
        <begin position="327"/>
        <end position="346"/>
    </location>
</feature>
<feature type="turn" evidence="13">
    <location>
        <begin position="349"/>
        <end position="352"/>
    </location>
</feature>
<feature type="strand" evidence="13">
    <location>
        <begin position="354"/>
        <end position="356"/>
    </location>
</feature>
<feature type="sequence conflict" description="In Ref. 2; AAG45951." evidence="10" ref="2">
    <original>Y</original>
    <variation>H</variation>
    <location sequence="P56545-2">
        <position position="455"/>
    </location>
</feature>
<feature type="sequence conflict" description="In Ref. 2; AAG45951." evidence="10" ref="2">
    <original>Q</original>
    <variation>E</variation>
    <location sequence="P56545-2">
        <position position="539"/>
    </location>
</feature>
<comment type="function">
    <text evidence="1">Corepressor targeting diverse transcription regulators. Functions in brown adipose tissue (BAT) differentiation (By similarity).</text>
</comment>
<comment type="function">
    <text>Isoform 2 probably acts as a scaffold for specialized synapses.</text>
</comment>
<comment type="subunit">
    <text evidence="1 3 4 5 7 8">Can form homodimers or heterodimers of CTBP1 and CTBP2. Interacts with HIPK2 and ZNF217. Interacts with PRDM16; represses white adipose tissue (WAT)-specific genes expression (By similarity). Interacts with PNN, NRIP1 and WIZ. Interacts with MCRIP1 (PubMed:25728771).</text>
</comment>
<comment type="subunit">
    <text evidence="6">(Microbial infection) Interacts with human adenovirus 5 E1A protein; this interaction seems to potentiate viral replication.</text>
</comment>
<comment type="interaction">
    <interactant intactId="EBI-741533">
        <id>P56545</id>
    </interactant>
    <interactant intactId="EBI-958997">
        <id>P20749</id>
        <label>BCL3</label>
    </interactant>
    <organismsDiffer>false</organismsDiffer>
    <experiments>2</experiments>
</comment>
<comment type="interaction">
    <interactant intactId="EBI-741533">
        <id>P56545</id>
    </interactant>
    <interactant intactId="EBI-741406">
        <id>P51946</id>
        <label>CCNH</label>
    </interactant>
    <organismsDiffer>false</organismsDiffer>
    <experiments>5</experiments>
</comment>
<comment type="interaction">
    <interactant intactId="EBI-741533">
        <id>P56545</id>
    </interactant>
    <interactant intactId="EBI-908846">
        <id>Q13363</id>
        <label>CTBP1</label>
    </interactant>
    <organismsDiffer>false</organismsDiffer>
    <experiments>17</experiments>
</comment>
<comment type="interaction">
    <interactant intactId="EBI-741533">
        <id>P56545</id>
    </interactant>
    <interactant intactId="EBI-10171858">
        <id>Q13363-2</id>
        <label>CTBP1</label>
    </interactant>
    <organismsDiffer>false</organismsDiffer>
    <experiments>5</experiments>
</comment>
<comment type="interaction">
    <interactant intactId="EBI-741533">
        <id>P56545</id>
    </interactant>
    <interactant intactId="EBI-16431245">
        <id>A0A0S2Z5I3</id>
        <label>DMRTB1</label>
    </interactant>
    <organismsDiffer>false</organismsDiffer>
    <experiments>3</experiments>
</comment>
<comment type="interaction">
    <interactant intactId="EBI-741533">
        <id>P56545</id>
    </interactant>
    <interactant intactId="EBI-741101">
        <id>Q13643</id>
        <label>FHL3</label>
    </interactant>
    <organismsDiffer>false</organismsDiffer>
    <experiments>4</experiments>
</comment>
<comment type="interaction">
    <interactant intactId="EBI-741533">
        <id>P56545</id>
    </interactant>
    <interactant intactId="EBI-983612">
        <id>O15409</id>
        <label>FOXP2</label>
    </interactant>
    <organismsDiffer>false</organismsDiffer>
    <experiments>4</experiments>
</comment>
<comment type="interaction">
    <interactant intactId="EBI-741533">
        <id>P56545</id>
    </interactant>
    <interactant intactId="EBI-3059266">
        <id>Q8IVP5</id>
        <label>FUNDC1</label>
    </interactant>
    <organismsDiffer>false</organismsDiffer>
    <experiments>3</experiments>
</comment>
<comment type="interaction">
    <interactant intactId="EBI-741533">
        <id>P56545</id>
    </interactant>
    <interactant intactId="EBI-2507362">
        <id>Q14526</id>
        <label>HIC1</label>
    </interactant>
    <organismsDiffer>false</organismsDiffer>
    <experiments>2</experiments>
</comment>
<comment type="interaction">
    <interactant intactId="EBI-741533">
        <id>P56545</id>
    </interactant>
    <interactant intactId="EBI-745305">
        <id>Q13422</id>
        <label>IKZF1</label>
    </interactant>
    <organismsDiffer>false</organismsDiffer>
    <experiments>6</experiments>
</comment>
<comment type="interaction">
    <interactant intactId="EBI-741533">
        <id>P56545</id>
    </interactant>
    <interactant intactId="EBI-3893057">
        <id>Q9UKS7</id>
        <label>IKZF2</label>
    </interactant>
    <organismsDiffer>false</organismsDiffer>
    <experiments>3</experiments>
</comment>
<comment type="interaction">
    <interactant intactId="EBI-741533">
        <id>P56545</id>
    </interactant>
    <interactant intactId="EBI-746045">
        <id>Q96JN0</id>
        <label>LCOR</label>
    </interactant>
    <organismsDiffer>false</organismsDiffer>
    <experiments>8</experiments>
</comment>
<comment type="interaction">
    <interactant intactId="EBI-741533">
        <id>P56545</id>
    </interactant>
    <interactant intactId="EBI-10190763">
        <id>O94818-2</id>
        <label>NOL4</label>
    </interactant>
    <organismsDiffer>false</organismsDiffer>
    <experiments>3</experiments>
</comment>
<comment type="interaction">
    <interactant intactId="EBI-741533">
        <id>P56545</id>
    </interactant>
    <interactant intactId="EBI-6660790">
        <id>Q96MY1</id>
        <label>NOL4L</label>
    </interactant>
    <organismsDiffer>false</organismsDiffer>
    <experiments>4</experiments>
</comment>
<comment type="interaction">
    <interactant intactId="EBI-741533">
        <id>P56545</id>
    </interactant>
    <interactant intactId="EBI-3396023">
        <id>Q9NQ66</id>
        <label>PLCB1</label>
    </interactant>
    <organismsDiffer>false</organismsDiffer>
    <experiments>3</experiments>
</comment>
<comment type="interaction">
    <interactant intactId="EBI-741533">
        <id>P56545</id>
    </interactant>
    <interactant intactId="EBI-714746">
        <id>O75807</id>
        <label>PPP1R15A</label>
    </interactant>
    <organismsDiffer>false</organismsDiffer>
    <experiments>2</experiments>
</comment>
<comment type="interaction">
    <interactant intactId="EBI-741533">
        <id>P56545</id>
    </interactant>
    <interactant intactId="EBI-3912635">
        <id>Q92786</id>
        <label>PROX1</label>
    </interactant>
    <organismsDiffer>false</organismsDiffer>
    <experiments>2</experiments>
</comment>
<comment type="interaction">
    <interactant intactId="EBI-741533">
        <id>P56545</id>
    </interactant>
    <interactant intactId="EBI-746228">
        <id>Q9Y5P3</id>
        <label>RAI2</label>
    </interactant>
    <organismsDiffer>false</organismsDiffer>
    <experiments>4</experiments>
</comment>
<comment type="interaction">
    <interactant intactId="EBI-741533">
        <id>P56545</id>
    </interactant>
    <interactant intactId="EBI-3928516">
        <id>Q9UN79</id>
        <label>SOX13</label>
    </interactant>
    <organismsDiffer>false</organismsDiffer>
    <experiments>3</experiments>
</comment>
<comment type="interaction">
    <interactant intactId="EBI-741533">
        <id>P56545</id>
    </interactant>
    <interactant intactId="EBI-714215">
        <id>Q15583</id>
        <label>TGIF1</label>
    </interactant>
    <organismsDiffer>false</organismsDiffer>
    <experiments>5</experiments>
</comment>
<comment type="interaction">
    <interactant intactId="EBI-741533">
        <id>P56545</id>
    </interactant>
    <interactant intactId="EBI-12691451">
        <id>Q15583-2</id>
        <label>TGIF1</label>
    </interactant>
    <organismsDiffer>false</organismsDiffer>
    <experiments>3</experiments>
</comment>
<comment type="interaction">
    <interactant intactId="EBI-741533">
        <id>P56545</id>
    </interactant>
    <interactant intactId="EBI-3232046">
        <id>Q99592</id>
        <label>ZBTB18</label>
    </interactant>
    <organismsDiffer>false</organismsDiffer>
    <experiments>8</experiments>
</comment>
<comment type="interaction">
    <interactant intactId="EBI-741533">
        <id>P56545</id>
    </interactant>
    <interactant intactId="EBI-2799490">
        <id>Q92618</id>
        <label>ZNF516</label>
    </interactant>
    <organismsDiffer>false</organismsDiffer>
    <experiments>7</experiments>
</comment>
<comment type="interaction">
    <interactant intactId="EBI-741533">
        <id>P56545</id>
    </interactant>
    <interactant intactId="EBI-10240029">
        <id>Q32MQ0</id>
        <label>ZNF750</label>
    </interactant>
    <organismsDiffer>false</organismsDiffer>
    <experiments>3</experiments>
</comment>
<comment type="interaction">
    <interactant intactId="EBI-741533">
        <id>P56545</id>
    </interactant>
    <interactant intactId="EBI-6115394">
        <id>A2APF7</id>
        <label>Zbp1</label>
    </interactant>
    <organismsDiffer>true</organismsDiffer>
    <experiments>2</experiments>
</comment>
<comment type="interaction">
    <interactant intactId="EBI-10171902">
        <id>P56545-3</id>
    </interactant>
    <interactant intactId="EBI-930964">
        <id>P54253</id>
        <label>ATXN1</label>
    </interactant>
    <organismsDiffer>false</organismsDiffer>
    <experiments>3</experiments>
</comment>
<comment type="interaction">
    <interactant intactId="EBI-10171902">
        <id>P56545-3</id>
    </interactant>
    <interactant intactId="EBI-741542">
        <id>Q9UIF8</id>
        <label>BAZ2B</label>
    </interactant>
    <organismsDiffer>false</organismsDiffer>
    <experiments>5</experiments>
</comment>
<comment type="interaction">
    <interactant intactId="EBI-10171902">
        <id>P56545-3</id>
    </interactant>
    <interactant intactId="EBI-10321972">
        <id>Q9UIF8-2</id>
        <label>BAZ2B</label>
    </interactant>
    <organismsDiffer>false</organismsDiffer>
    <experiments>3</experiments>
</comment>
<comment type="interaction">
    <interactant intactId="EBI-10171902">
        <id>P56545-3</id>
    </interactant>
    <interactant intactId="EBI-6083685">
        <id>Q9H6U6</id>
        <label>BCAS3</label>
    </interactant>
    <organismsDiffer>false</organismsDiffer>
    <experiments>3</experiments>
</comment>
<comment type="interaction">
    <interactant intactId="EBI-10171902">
        <id>P56545-3</id>
    </interactant>
    <interactant intactId="EBI-947514">
        <id>Q02641</id>
        <label>CACNB1</label>
    </interactant>
    <organismsDiffer>false</organismsDiffer>
    <experiments>3</experiments>
</comment>
<comment type="interaction">
    <interactant intactId="EBI-10171902">
        <id>P56545-3</id>
    </interactant>
    <interactant intactId="EBI-2874501">
        <id>Q08289</id>
        <label>CACNB2</label>
    </interactant>
    <organismsDiffer>false</organismsDiffer>
    <experiments>5</experiments>
</comment>
<comment type="interaction">
    <interactant intactId="EBI-10171902">
        <id>P56545-3</id>
    </interactant>
    <interactant intactId="EBI-1184651">
        <id>P54284</id>
        <label>CACNB3</label>
    </interactant>
    <organismsDiffer>false</organismsDiffer>
    <experiments>8</experiments>
</comment>
<comment type="interaction">
    <interactant intactId="EBI-10171902">
        <id>P56545-3</id>
    </interactant>
    <interactant intactId="EBI-714838">
        <id>O00305</id>
        <label>CACNB4</label>
    </interactant>
    <organismsDiffer>false</organismsDiffer>
    <experiments>3</experiments>
</comment>
<comment type="interaction">
    <interactant intactId="EBI-10171902">
        <id>P56545-3</id>
    </interactant>
    <interactant intactId="EBI-1765641">
        <id>Q9Y6W3</id>
        <label>CAPN7</label>
    </interactant>
    <organismsDiffer>false</organismsDiffer>
    <experiments>3</experiments>
</comment>
<comment type="interaction">
    <interactant intactId="EBI-10171902">
        <id>P56545-3</id>
    </interactant>
    <interactant intactId="EBI-744545">
        <id>Q8NEC5</id>
        <label>CATSPER1</label>
    </interactant>
    <organismsDiffer>false</organismsDiffer>
    <experiments>3</experiments>
</comment>
<comment type="interaction">
    <interactant intactId="EBI-10171902">
        <id>P56545-3</id>
    </interactant>
    <interactant intactId="EBI-744556">
        <id>Q96HB5</id>
        <label>CCDC120</label>
    </interactant>
    <organismsDiffer>false</organismsDiffer>
    <experiments>3</experiments>
</comment>
<comment type="interaction">
    <interactant intactId="EBI-10171902">
        <id>P56545-3</id>
    </interactant>
    <interactant intactId="EBI-11975967">
        <id>Q76N32-2</id>
        <label>CEP68</label>
    </interactant>
    <organismsDiffer>false</organismsDiffer>
    <experiments>3</experiments>
</comment>
<comment type="interaction">
    <interactant intactId="EBI-10171902">
        <id>P56545-3</id>
    </interactant>
    <interactant intactId="EBI-711360">
        <id>P33240</id>
        <label>CSTF2</label>
    </interactant>
    <organismsDiffer>false</organismsDiffer>
    <experiments>3</experiments>
</comment>
<comment type="interaction">
    <interactant intactId="EBI-10171902">
        <id>P56545-3</id>
    </interactant>
    <interactant intactId="EBI-10171858">
        <id>Q13363-2</id>
        <label>CTBP1</label>
    </interactant>
    <organismsDiffer>false</organismsDiffer>
    <experiments>4</experiments>
</comment>
<comment type="interaction">
    <interactant intactId="EBI-10171902">
        <id>P56545-3</id>
    </interactant>
    <interactant intactId="EBI-10171902">
        <id>P56545-3</id>
        <label>CTBP2</label>
    </interactant>
    <organismsDiffer>false</organismsDiffer>
    <experiments>3</experiments>
</comment>
<comment type="interaction">
    <interactant intactId="EBI-10171902">
        <id>P56545-3</id>
    </interactant>
    <interactant intactId="EBI-10178554">
        <id>I6L9A0</id>
        <label>DMRTB1</label>
    </interactant>
    <organismsDiffer>false</organismsDiffer>
    <experiments>3</experiments>
</comment>
<comment type="interaction">
    <interactant intactId="EBI-10171902">
        <id>P56545-3</id>
    </interactant>
    <interactant intactId="EBI-11984733">
        <id>O60941-5</id>
        <label>DTNB</label>
    </interactant>
    <organismsDiffer>false</organismsDiffer>
    <experiments>5</experiments>
</comment>
<comment type="interaction">
    <interactant intactId="EBI-10171902">
        <id>P56545-3</id>
    </interactant>
    <interactant intactId="EBI-7357329">
        <id>Q9H596</id>
        <label>DUSP21</label>
    </interactant>
    <organismsDiffer>false</organismsDiffer>
    <experiments>3</experiments>
</comment>
<comment type="interaction">
    <interactant intactId="EBI-10171902">
        <id>P56545-3</id>
    </interactant>
    <interactant intactId="EBI-1175354">
        <id>Q9H6Z9</id>
        <label>EGLN3</label>
    </interactant>
    <organismsDiffer>false</organismsDiffer>
    <experiments>3</experiments>
</comment>
<comment type="interaction">
    <interactant intactId="EBI-10171902">
        <id>P56545-3</id>
    </interactant>
    <interactant intactId="EBI-12012124">
        <id>Q04637-9</id>
        <label>EIF4G1</label>
    </interactant>
    <organismsDiffer>false</organismsDiffer>
    <experiments>3</experiments>
</comment>
<comment type="interaction">
    <interactant intactId="EBI-10171902">
        <id>P56545-3</id>
    </interactant>
    <interactant intactId="EBI-744099">
        <id>Q9H0I2</id>
        <label>ENKD1</label>
    </interactant>
    <organismsDiffer>false</organismsDiffer>
    <experiments>3</experiments>
</comment>
<comment type="interaction">
    <interactant intactId="EBI-10171902">
        <id>P56545-3</id>
    </interactant>
    <interactant intactId="EBI-2271018">
        <id>Q01543</id>
        <label>FLI1</label>
    </interactant>
    <organismsDiffer>false</organismsDiffer>
    <experiments>3</experiments>
</comment>
<comment type="interaction">
    <interactant intactId="EBI-10171902">
        <id>P56545-3</id>
    </interactant>
    <interactant intactId="EBI-983612">
        <id>O15409</id>
        <label>FOXP2</label>
    </interactant>
    <organismsDiffer>false</organismsDiffer>
    <experiments>3</experiments>
</comment>
<comment type="interaction">
    <interactant intactId="EBI-10171902">
        <id>P56545-3</id>
    </interactant>
    <interactant intactId="EBI-7251368">
        <id>Q9BZE0</id>
        <label>GLIS2</label>
    </interactant>
    <organismsDiffer>false</organismsDiffer>
    <experiments>3</experiments>
</comment>
<comment type="interaction">
    <interactant intactId="EBI-10171902">
        <id>P56545-3</id>
    </interactant>
    <interactant intactId="EBI-8470697">
        <id>P20719</id>
        <label>HOXA5</label>
    </interactant>
    <organismsDiffer>false</organismsDiffer>
    <experiments>5</experiments>
</comment>
<comment type="interaction">
    <interactant intactId="EBI-10171902">
        <id>P56545-3</id>
    </interactant>
    <interactant intactId="EBI-3893317">
        <id>P09067</id>
        <label>HOXB5</label>
    </interactant>
    <organismsDiffer>false</organismsDiffer>
    <experiments>8</experiments>
</comment>
<comment type="interaction">
    <interactant intactId="EBI-10171902">
        <id>P56545-3</id>
    </interactant>
    <interactant intactId="EBI-11955357">
        <id>Q00444</id>
        <label>HOXC5</label>
    </interactant>
    <organismsDiffer>false</organismsDiffer>
    <experiments>3</experiments>
</comment>
<comment type="interaction">
    <interactant intactId="EBI-10171902">
        <id>P56545-3</id>
    </interactant>
    <interactant intactId="EBI-466029">
        <id>P42858</id>
        <label>HTT</label>
    </interactant>
    <organismsDiffer>false</organismsDiffer>
    <experiments>3</experiments>
</comment>
<comment type="interaction">
    <interactant intactId="EBI-10171902">
        <id>P56545-3</id>
    </interactant>
    <interactant intactId="EBI-745305">
        <id>Q13422</id>
        <label>IKZF1</label>
    </interactant>
    <organismsDiffer>false</organismsDiffer>
    <experiments>3</experiments>
</comment>
<comment type="interaction">
    <interactant intactId="EBI-10171902">
        <id>P56545-3</id>
    </interactant>
    <interactant intactId="EBI-11522367">
        <id>Q13422-7</id>
        <label>IKZF1</label>
    </interactant>
    <organismsDiffer>false</organismsDiffer>
    <experiments>3</experiments>
</comment>
<comment type="interaction">
    <interactant intactId="EBI-10171902">
        <id>P56545-3</id>
    </interactant>
    <interactant intactId="EBI-3893057">
        <id>Q9UKS7</id>
        <label>IKZF2</label>
    </interactant>
    <organismsDiffer>false</organismsDiffer>
    <experiments>3</experiments>
</comment>
<comment type="interaction">
    <interactant intactId="EBI-10171902">
        <id>P56545-3</id>
    </interactant>
    <interactant intactId="EBI-747204">
        <id>Q9UKT9</id>
        <label>IKZF3</label>
    </interactant>
    <organismsDiffer>false</organismsDiffer>
    <experiments>3</experiments>
</comment>
<comment type="interaction">
    <interactant intactId="EBI-10171902">
        <id>P56545-3</id>
    </interactant>
    <interactant intactId="EBI-8472267">
        <id>P57682</id>
        <label>KLF3</label>
    </interactant>
    <organismsDiffer>false</organismsDiffer>
    <experiments>3</experiments>
</comment>
<comment type="interaction">
    <interactant intactId="EBI-10171902">
        <id>P56545-3</id>
    </interactant>
    <interactant intactId="EBI-12351611">
        <id>Q16719-2</id>
        <label>KYNU</label>
    </interactant>
    <organismsDiffer>false</organismsDiffer>
    <experiments>3</experiments>
</comment>
<comment type="interaction">
    <interactant intactId="EBI-10171902">
        <id>P56545-3</id>
    </interactant>
    <interactant intactId="EBI-746045">
        <id>Q96JN0</id>
        <label>LCOR</label>
    </interactant>
    <organismsDiffer>false</organismsDiffer>
    <experiments>3</experiments>
</comment>
<comment type="interaction">
    <interactant intactId="EBI-10171902">
        <id>P56545-3</id>
    </interactant>
    <interactant intactId="EBI-12111580">
        <id>Q8N3X6-3</id>
        <label>LCORL</label>
    </interactant>
    <organismsDiffer>false</organismsDiffer>
    <experiments>3</experiments>
</comment>
<comment type="interaction">
    <interactant intactId="EBI-10171902">
        <id>P56545-3</id>
    </interactant>
    <interactant intactId="EBI-2798728">
        <id>P61968</id>
        <label>LMO4</label>
    </interactant>
    <organismsDiffer>false</organismsDiffer>
    <experiments>3</experiments>
</comment>
<comment type="interaction">
    <interactant intactId="EBI-10171902">
        <id>P56545-3</id>
    </interactant>
    <interactant intactId="EBI-10699187">
        <id>Q8IXL7-2</id>
        <label>MSRB3</label>
    </interactant>
    <organismsDiffer>false</organismsDiffer>
    <experiments>5</experiments>
</comment>
<comment type="interaction">
    <interactant intactId="EBI-10171902">
        <id>P56545-3</id>
    </interactant>
    <interactant intactId="EBI-11750983">
        <id>Q9HC98-4</id>
        <label>NEK6</label>
    </interactant>
    <organismsDiffer>false</organismsDiffer>
    <experiments>3</experiments>
</comment>
<comment type="interaction">
    <interactant intactId="EBI-10171902">
        <id>P56545-3</id>
    </interactant>
    <interactant intactId="EBI-10190763">
        <id>O94818-2</id>
        <label>NOL4</label>
    </interactant>
    <organismsDiffer>false</organismsDiffer>
    <experiments>3</experiments>
</comment>
<comment type="interaction">
    <interactant intactId="EBI-10171902">
        <id>P56545-3</id>
    </interactant>
    <interactant intactId="EBI-6660790">
        <id>Q96MY1</id>
        <label>NOL4L</label>
    </interactant>
    <organismsDiffer>false</organismsDiffer>
    <experiments>3</experiments>
</comment>
<comment type="interaction">
    <interactant intactId="EBI-10171902">
        <id>P56545-3</id>
    </interactant>
    <interactant intactId="EBI-3396023">
        <id>Q9NQ66</id>
        <label>PLCB1</label>
    </interactant>
    <organismsDiffer>false</organismsDiffer>
    <experiments>3</experiments>
</comment>
<comment type="interaction">
    <interactant intactId="EBI-10171902">
        <id>P56545-3</id>
    </interactant>
    <interactant intactId="EBI-347462">
        <id>P47897</id>
        <label>QARS1</label>
    </interactant>
    <organismsDiffer>false</organismsDiffer>
    <experiments>3</experiments>
</comment>
<comment type="interaction">
    <interactant intactId="EBI-10171902">
        <id>P56545-3</id>
    </interactant>
    <interactant intactId="EBI-746228">
        <id>Q9Y5P3</id>
        <label>RAI2</label>
    </interactant>
    <organismsDiffer>false</organismsDiffer>
    <experiments>3</experiments>
</comment>
<comment type="interaction">
    <interactant intactId="EBI-10171902">
        <id>P56545-3</id>
    </interactant>
    <interactant intactId="EBI-11322432">
        <id>Q8NC74</id>
        <label>RBBP8NL</label>
    </interactant>
    <organismsDiffer>false</organismsDiffer>
    <experiments>3</experiments>
</comment>
<comment type="interaction">
    <interactant intactId="EBI-10171902">
        <id>P56545-3</id>
    </interactant>
    <interactant intactId="EBI-10182375">
        <id>Q9UFD9</id>
        <label>RIMBP3</label>
    </interactant>
    <organismsDiffer>false</organismsDiffer>
    <experiments>3</experiments>
</comment>
<comment type="interaction">
    <interactant intactId="EBI-10171902">
        <id>P56545-3</id>
    </interactant>
    <interactant intactId="EBI-9916363">
        <id>Q8IUD6</id>
        <label>RNF135</label>
    </interactant>
    <organismsDiffer>false</organismsDiffer>
    <experiments>3</experiments>
</comment>
<comment type="interaction">
    <interactant intactId="EBI-10171902">
        <id>P56545-3</id>
    </interactant>
    <interactant intactId="EBI-727004">
        <id>O00560</id>
        <label>SDCBP</label>
    </interactant>
    <organismsDiffer>false</organismsDiffer>
    <experiments>3</experiments>
</comment>
<comment type="interaction">
    <interactant intactId="EBI-10171902">
        <id>P56545-3</id>
    </interactant>
    <interactant intactId="EBI-12037847">
        <id>Q6ZSJ9</id>
        <label>SHISA6</label>
    </interactant>
    <organismsDiffer>false</organismsDiffer>
    <experiments>3</experiments>
</comment>
<comment type="interaction">
    <interactant intactId="EBI-10171902">
        <id>P56545-3</id>
    </interactant>
    <interactant intactId="EBI-3928516">
        <id>Q9UN79</id>
        <label>SOX13</label>
    </interactant>
    <organismsDiffer>false</organismsDiffer>
    <experiments>3</experiments>
</comment>
<comment type="interaction">
    <interactant intactId="EBI-10171902">
        <id>P56545-3</id>
    </interactant>
    <interactant intactId="EBI-11741437">
        <id>Q08117-2</id>
        <label>TLE5</label>
    </interactant>
    <organismsDiffer>false</organismsDiffer>
    <experiments>3</experiments>
</comment>
<comment type="interaction">
    <interactant intactId="EBI-10171902">
        <id>P56545-3</id>
    </interactant>
    <interactant intactId="EBI-11059915">
        <id>Q8N7C3</id>
        <label>TRIML2</label>
    </interactant>
    <organismsDiffer>false</organismsDiffer>
    <experiments>3</experiments>
</comment>
<comment type="interaction">
    <interactant intactId="EBI-10171902">
        <id>P56545-3</id>
    </interactant>
    <interactant intactId="EBI-9053916">
        <id>Q63HK5</id>
        <label>TSHZ3</label>
    </interactant>
    <organismsDiffer>false</organismsDiffer>
    <experiments>6</experiments>
</comment>
<comment type="interaction">
    <interactant intactId="EBI-10171902">
        <id>P56545-3</id>
    </interactant>
    <interactant intactId="EBI-12894399">
        <id>Q9H8Y1</id>
        <label>VRTN</label>
    </interactant>
    <organismsDiffer>false</organismsDiffer>
    <experiments>5</experiments>
</comment>
<comment type="interaction">
    <interactant intactId="EBI-10171902">
        <id>P56545-3</id>
    </interactant>
    <interactant intactId="EBI-3232046">
        <id>Q99592</id>
        <label>ZBTB18</label>
    </interactant>
    <organismsDiffer>false</organismsDiffer>
    <experiments>6</experiments>
</comment>
<comment type="interaction">
    <interactant intactId="EBI-10171902">
        <id>P56545-3</id>
    </interactant>
    <interactant intactId="EBI-12287587">
        <id>B2RXF5</id>
        <label>ZBTB42</label>
    </interactant>
    <organismsDiffer>false</organismsDiffer>
    <experiments>3</experiments>
</comment>
<comment type="interaction">
    <interactant intactId="EBI-10171902">
        <id>P56545-3</id>
    </interactant>
    <interactant intactId="EBI-7252920">
        <id>Q8NAM6</id>
        <label>ZSCAN4</label>
    </interactant>
    <organismsDiffer>false</organismsDiffer>
    <experiments>3</experiments>
</comment>
<comment type="subcellular location">
    <subcellularLocation>
        <location evidence="10">Nucleus</location>
    </subcellularLocation>
    <subcellularLocation>
        <location evidence="1">Synapse</location>
    </subcellularLocation>
</comment>
<comment type="alternative products">
    <event type="alternative splicing"/>
    <isoform>
        <id>P56545-1</id>
        <name>1</name>
        <sequence type="displayed"/>
    </isoform>
    <isoform>
        <id>P56545-2</id>
        <name>2</name>
        <name>Ribeye</name>
        <sequence type="described" ref="VSP_027615"/>
    </isoform>
    <isoform>
        <id>P56545-3</id>
        <name>3</name>
        <sequence type="described" ref="VSP_058946"/>
    </isoform>
</comment>
<comment type="tissue specificity">
    <text>Ubiquitous. Highest levels in heart, skeletal muscle, and pancreas.</text>
</comment>
<comment type="similarity">
    <text evidence="10">Belongs to the D-isomer specific 2-hydroxyacid dehydrogenase family.</text>
</comment>
<gene>
    <name type="primary">CTBP2</name>
</gene>
<sequence>MALVDKHKVKRQRLDRICEGIRPQIMNGPLHPRPLVALLDGRDCTVEMPILKDLATVAFCDAQSTQEIHEKVLNEAVGAMMYHTITLTREDLEKFKALRVIVRIGSGYDNVDIKAAGELGIAVCNIPSAAVEETADSTICHILNLYRRNTWLYQALREGTRVQSVEQIREVASGAARIRGETLGLIGFGRTGQAVAVRAKAFGFSVIFYDPYLQDGIERSLGVQRVYTLQDLLYQSDCVSLHCNLNEHNHHLINDFTIKQMRQGAFLVNAARGGLVDEKALAQALKEGRIRGAALDVHESEPFSFAQGPLKDAPNLICTPHTAWYSEQASLEMREAAATEIRRAITGRIPESLRNCVNKEFFVTSAPWSVIDQQAIHPELNGATYRYPPGIVGVAPGGLPAAMEGIIPGGIPVTHNLPTVAHPSQAPSPNQPTKHGDNREHPNEQ</sequence>
<name>CTBP2_HUMAN</name>
<accession>P56545</accession>
<accession>A8K2X5</accession>
<accession>D3DRF5</accession>
<accession>O43449</accession>
<accession>Q5SQP7</accession>
<accession>Q69YI3</accession>
<accession>Q86SV0</accession>
<accession>Q8IY44</accession>
<accession>Q9H2T8</accession>
<keyword id="KW-0002">3D-structure</keyword>
<keyword id="KW-0025">Alternative splicing</keyword>
<keyword id="KW-0221">Differentiation</keyword>
<keyword id="KW-0903">Direct protein sequencing</keyword>
<keyword id="KW-0945">Host-virus interaction</keyword>
<keyword id="KW-0488">Methylation</keyword>
<keyword id="KW-0520">NAD</keyword>
<keyword id="KW-0539">Nucleus</keyword>
<keyword id="KW-0560">Oxidoreductase</keyword>
<keyword id="KW-0597">Phosphoprotein</keyword>
<keyword id="KW-1267">Proteomics identification</keyword>
<keyword id="KW-1185">Reference proteome</keyword>
<keyword id="KW-0678">Repressor</keyword>
<keyword id="KW-0770">Synapse</keyword>
<keyword id="KW-0804">Transcription</keyword>
<keyword id="KW-0805">Transcription regulation</keyword>
<protein>
    <recommendedName>
        <fullName>C-terminal-binding protein 2</fullName>
        <shortName>CtBP2</shortName>
    </recommendedName>
</protein>
<reference key="1">
    <citation type="journal article" date="1998" name="Genomics">
        <title>A novel C-terminal binding protein (CTBP2) is closely related to CTBP1, an adenovirus E1A-binding protein, and maps to human chromosome 21q21.3.</title>
        <authorList>
            <person name="Katsanis N."/>
            <person name="Fisher E.M.C."/>
        </authorList>
    </citation>
    <scope>NUCLEOTIDE SEQUENCE [MRNA] (ISOFORM 1)</scope>
</reference>
<reference key="2">
    <citation type="journal article" date="2000" name="Neuron">
        <title>RIBEYE, a component of synaptic ribbons: a protein's journey through evolution provides insight into synaptic ribbon function.</title>
        <authorList>
            <person name="Schmitz F."/>
            <person name="Koenigstorfer A."/>
            <person name="Suedhof T.C."/>
        </authorList>
    </citation>
    <scope>NUCLEOTIDE SEQUENCE [MRNA] (ISOFORM 2)</scope>
</reference>
<reference key="3">
    <citation type="submission" date="2003-05" db="EMBL/GenBank/DDBJ databases">
        <title>Cloning of human full-length CDSs in BD Creator(TM) system donor vector.</title>
        <authorList>
            <person name="Kalnine N."/>
            <person name="Chen X."/>
            <person name="Rolfs A."/>
            <person name="Halleck A."/>
            <person name="Hines L."/>
            <person name="Eisenstein S."/>
            <person name="Koundinya M."/>
            <person name="Raphael J."/>
            <person name="Moreira D."/>
            <person name="Kelley T."/>
            <person name="LaBaer J."/>
            <person name="Lin Y."/>
            <person name="Phelan M."/>
            <person name="Farmer A."/>
        </authorList>
    </citation>
    <scope>NUCLEOTIDE SEQUENCE [LARGE SCALE MRNA] (ISOFORM 1)</scope>
</reference>
<reference key="4">
    <citation type="journal article" date="2004" name="Nat. Genet.">
        <title>Complete sequencing and characterization of 21,243 full-length human cDNAs.</title>
        <authorList>
            <person name="Ota T."/>
            <person name="Suzuki Y."/>
            <person name="Nishikawa T."/>
            <person name="Otsuki T."/>
            <person name="Sugiyama T."/>
            <person name="Irie R."/>
            <person name="Wakamatsu A."/>
            <person name="Hayashi K."/>
            <person name="Sato H."/>
            <person name="Nagai K."/>
            <person name="Kimura K."/>
            <person name="Makita H."/>
            <person name="Sekine M."/>
            <person name="Obayashi M."/>
            <person name="Nishi T."/>
            <person name="Shibahara T."/>
            <person name="Tanaka T."/>
            <person name="Ishii S."/>
            <person name="Yamamoto J."/>
            <person name="Saito K."/>
            <person name="Kawai Y."/>
            <person name="Isono Y."/>
            <person name="Nakamura Y."/>
            <person name="Nagahari K."/>
            <person name="Murakami K."/>
            <person name="Yasuda T."/>
            <person name="Iwayanagi T."/>
            <person name="Wagatsuma M."/>
            <person name="Shiratori A."/>
            <person name="Sudo H."/>
            <person name="Hosoiri T."/>
            <person name="Kaku Y."/>
            <person name="Kodaira H."/>
            <person name="Kondo H."/>
            <person name="Sugawara M."/>
            <person name="Takahashi M."/>
            <person name="Kanda K."/>
            <person name="Yokoi T."/>
            <person name="Furuya T."/>
            <person name="Kikkawa E."/>
            <person name="Omura Y."/>
            <person name="Abe K."/>
            <person name="Kamihara K."/>
            <person name="Katsuta N."/>
            <person name="Sato K."/>
            <person name="Tanikawa M."/>
            <person name="Yamazaki M."/>
            <person name="Ninomiya K."/>
            <person name="Ishibashi T."/>
            <person name="Yamashita H."/>
            <person name="Murakawa K."/>
            <person name="Fujimori K."/>
            <person name="Tanai H."/>
            <person name="Kimata M."/>
            <person name="Watanabe M."/>
            <person name="Hiraoka S."/>
            <person name="Chiba Y."/>
            <person name="Ishida S."/>
            <person name="Ono Y."/>
            <person name="Takiguchi S."/>
            <person name="Watanabe S."/>
            <person name="Yosida M."/>
            <person name="Hotuta T."/>
            <person name="Kusano J."/>
            <person name="Kanehori K."/>
            <person name="Takahashi-Fujii A."/>
            <person name="Hara H."/>
            <person name="Tanase T.-O."/>
            <person name="Nomura Y."/>
            <person name="Togiya S."/>
            <person name="Komai F."/>
            <person name="Hara R."/>
            <person name="Takeuchi K."/>
            <person name="Arita M."/>
            <person name="Imose N."/>
            <person name="Musashino K."/>
            <person name="Yuuki H."/>
            <person name="Oshima A."/>
            <person name="Sasaki N."/>
            <person name="Aotsuka S."/>
            <person name="Yoshikawa Y."/>
            <person name="Matsunawa H."/>
            <person name="Ichihara T."/>
            <person name="Shiohata N."/>
            <person name="Sano S."/>
            <person name="Moriya S."/>
            <person name="Momiyama H."/>
            <person name="Satoh N."/>
            <person name="Takami S."/>
            <person name="Terashima Y."/>
            <person name="Suzuki O."/>
            <person name="Nakagawa S."/>
            <person name="Senoh A."/>
            <person name="Mizoguchi H."/>
            <person name="Goto Y."/>
            <person name="Shimizu F."/>
            <person name="Wakebe H."/>
            <person name="Hishigaki H."/>
            <person name="Watanabe T."/>
            <person name="Sugiyama A."/>
            <person name="Takemoto M."/>
            <person name="Kawakami B."/>
            <person name="Yamazaki M."/>
            <person name="Watanabe K."/>
            <person name="Kumagai A."/>
            <person name="Itakura S."/>
            <person name="Fukuzumi Y."/>
            <person name="Fujimori Y."/>
            <person name="Komiyama M."/>
            <person name="Tashiro H."/>
            <person name="Tanigami A."/>
            <person name="Fujiwara T."/>
            <person name="Ono T."/>
            <person name="Yamada K."/>
            <person name="Fujii Y."/>
            <person name="Ozaki K."/>
            <person name="Hirao M."/>
            <person name="Ohmori Y."/>
            <person name="Kawabata A."/>
            <person name="Hikiji T."/>
            <person name="Kobatake N."/>
            <person name="Inagaki H."/>
            <person name="Ikema Y."/>
            <person name="Okamoto S."/>
            <person name="Okitani R."/>
            <person name="Kawakami T."/>
            <person name="Noguchi S."/>
            <person name="Itoh T."/>
            <person name="Shigeta K."/>
            <person name="Senba T."/>
            <person name="Matsumura K."/>
            <person name="Nakajima Y."/>
            <person name="Mizuno T."/>
            <person name="Morinaga M."/>
            <person name="Sasaki M."/>
            <person name="Togashi T."/>
            <person name="Oyama M."/>
            <person name="Hata H."/>
            <person name="Watanabe M."/>
            <person name="Komatsu T."/>
            <person name="Mizushima-Sugano J."/>
            <person name="Satoh T."/>
            <person name="Shirai Y."/>
            <person name="Takahashi Y."/>
            <person name="Nakagawa K."/>
            <person name="Okumura K."/>
            <person name="Nagase T."/>
            <person name="Nomura N."/>
            <person name="Kikuchi H."/>
            <person name="Masuho Y."/>
            <person name="Yamashita R."/>
            <person name="Nakai K."/>
            <person name="Yada T."/>
            <person name="Nakamura Y."/>
            <person name="Ohara O."/>
            <person name="Isogai T."/>
            <person name="Sugano S."/>
        </authorList>
    </citation>
    <scope>NUCLEOTIDE SEQUENCE [LARGE SCALE MRNA] (ISOFORM 1)</scope>
    <source>
        <tissue>Umbilical cord blood</tissue>
    </source>
</reference>
<reference key="5">
    <citation type="journal article" date="2007" name="BMC Genomics">
        <title>The full-ORF clone resource of the German cDNA consortium.</title>
        <authorList>
            <person name="Bechtel S."/>
            <person name="Rosenfelder H."/>
            <person name="Duda A."/>
            <person name="Schmidt C.P."/>
            <person name="Ernst U."/>
            <person name="Wellenreuther R."/>
            <person name="Mehrle A."/>
            <person name="Schuster C."/>
            <person name="Bahr A."/>
            <person name="Bloecker H."/>
            <person name="Heubner D."/>
            <person name="Hoerlein A."/>
            <person name="Michel G."/>
            <person name="Wedler H."/>
            <person name="Koehrer K."/>
            <person name="Ottenwaelder B."/>
            <person name="Poustka A."/>
            <person name="Wiemann S."/>
            <person name="Schupp I."/>
        </authorList>
    </citation>
    <scope>NUCLEOTIDE SEQUENCE [LARGE SCALE MRNA] (ISOFORM 1)</scope>
    <source>
        <tissue>Melanoma</tissue>
    </source>
</reference>
<reference key="6">
    <citation type="journal article" date="2004" name="Nature">
        <title>The DNA sequence and comparative analysis of human chromosome 10.</title>
        <authorList>
            <person name="Deloukas P."/>
            <person name="Earthrowl M.E."/>
            <person name="Grafham D.V."/>
            <person name="Rubenfield M."/>
            <person name="French L."/>
            <person name="Steward C.A."/>
            <person name="Sims S.K."/>
            <person name="Jones M.C."/>
            <person name="Searle S."/>
            <person name="Scott C."/>
            <person name="Howe K."/>
            <person name="Hunt S.E."/>
            <person name="Andrews T.D."/>
            <person name="Gilbert J.G.R."/>
            <person name="Swarbreck D."/>
            <person name="Ashurst J.L."/>
            <person name="Taylor A."/>
            <person name="Battles J."/>
            <person name="Bird C.P."/>
            <person name="Ainscough R."/>
            <person name="Almeida J.P."/>
            <person name="Ashwell R.I.S."/>
            <person name="Ambrose K.D."/>
            <person name="Babbage A.K."/>
            <person name="Bagguley C.L."/>
            <person name="Bailey J."/>
            <person name="Banerjee R."/>
            <person name="Bates K."/>
            <person name="Beasley H."/>
            <person name="Bray-Allen S."/>
            <person name="Brown A.J."/>
            <person name="Brown J.Y."/>
            <person name="Burford D.C."/>
            <person name="Burrill W."/>
            <person name="Burton J."/>
            <person name="Cahill P."/>
            <person name="Camire D."/>
            <person name="Carter N.P."/>
            <person name="Chapman J.C."/>
            <person name="Clark S.Y."/>
            <person name="Clarke G."/>
            <person name="Clee C.M."/>
            <person name="Clegg S."/>
            <person name="Corby N."/>
            <person name="Coulson A."/>
            <person name="Dhami P."/>
            <person name="Dutta I."/>
            <person name="Dunn M."/>
            <person name="Faulkner L."/>
            <person name="Frankish A."/>
            <person name="Frankland J.A."/>
            <person name="Garner P."/>
            <person name="Garnett J."/>
            <person name="Gribble S."/>
            <person name="Griffiths C."/>
            <person name="Grocock R."/>
            <person name="Gustafson E."/>
            <person name="Hammond S."/>
            <person name="Harley J.L."/>
            <person name="Hart E."/>
            <person name="Heath P.D."/>
            <person name="Ho T.P."/>
            <person name="Hopkins B."/>
            <person name="Horne J."/>
            <person name="Howden P.J."/>
            <person name="Huckle E."/>
            <person name="Hynds C."/>
            <person name="Johnson C."/>
            <person name="Johnson D."/>
            <person name="Kana A."/>
            <person name="Kay M."/>
            <person name="Kimberley A.M."/>
            <person name="Kershaw J.K."/>
            <person name="Kokkinaki M."/>
            <person name="Laird G.K."/>
            <person name="Lawlor S."/>
            <person name="Lee H.M."/>
            <person name="Leongamornlert D.A."/>
            <person name="Laird G."/>
            <person name="Lloyd C."/>
            <person name="Lloyd D.M."/>
            <person name="Loveland J."/>
            <person name="Lovell J."/>
            <person name="McLaren S."/>
            <person name="McLay K.E."/>
            <person name="McMurray A."/>
            <person name="Mashreghi-Mohammadi M."/>
            <person name="Matthews L."/>
            <person name="Milne S."/>
            <person name="Nickerson T."/>
            <person name="Nguyen M."/>
            <person name="Overton-Larty E."/>
            <person name="Palmer S.A."/>
            <person name="Pearce A.V."/>
            <person name="Peck A.I."/>
            <person name="Pelan S."/>
            <person name="Phillimore B."/>
            <person name="Porter K."/>
            <person name="Rice C.M."/>
            <person name="Rogosin A."/>
            <person name="Ross M.T."/>
            <person name="Sarafidou T."/>
            <person name="Sehra H.K."/>
            <person name="Shownkeen R."/>
            <person name="Skuce C.D."/>
            <person name="Smith M."/>
            <person name="Standring L."/>
            <person name="Sycamore N."/>
            <person name="Tester J."/>
            <person name="Thorpe A."/>
            <person name="Torcasso W."/>
            <person name="Tracey A."/>
            <person name="Tromans A."/>
            <person name="Tsolas J."/>
            <person name="Wall M."/>
            <person name="Walsh J."/>
            <person name="Wang H."/>
            <person name="Weinstock K."/>
            <person name="West A.P."/>
            <person name="Willey D.L."/>
            <person name="Whitehead S.L."/>
            <person name="Wilming L."/>
            <person name="Wray P.W."/>
            <person name="Young L."/>
            <person name="Chen Y."/>
            <person name="Lovering R.C."/>
            <person name="Moschonas N.K."/>
            <person name="Siebert R."/>
            <person name="Fechtel K."/>
            <person name="Bentley D."/>
            <person name="Durbin R.M."/>
            <person name="Hubbard T."/>
            <person name="Doucette-Stamm L."/>
            <person name="Beck S."/>
            <person name="Smith D.R."/>
            <person name="Rogers J."/>
        </authorList>
    </citation>
    <scope>NUCLEOTIDE SEQUENCE [LARGE SCALE GENOMIC DNA]</scope>
</reference>
<reference key="7">
    <citation type="submission" date="2005-09" db="EMBL/GenBank/DDBJ databases">
        <authorList>
            <person name="Mural R.J."/>
            <person name="Istrail S."/>
            <person name="Sutton G.G."/>
            <person name="Florea L."/>
            <person name="Halpern A.L."/>
            <person name="Mobarry C.M."/>
            <person name="Lippert R."/>
            <person name="Walenz B."/>
            <person name="Shatkay H."/>
            <person name="Dew I."/>
            <person name="Miller J.R."/>
            <person name="Flanigan M.J."/>
            <person name="Edwards N.J."/>
            <person name="Bolanos R."/>
            <person name="Fasulo D."/>
            <person name="Halldorsson B.V."/>
            <person name="Hannenhalli S."/>
            <person name="Turner R."/>
            <person name="Yooseph S."/>
            <person name="Lu F."/>
            <person name="Nusskern D.R."/>
            <person name="Shue B.C."/>
            <person name="Zheng X.H."/>
            <person name="Zhong F."/>
            <person name="Delcher A.L."/>
            <person name="Huson D.H."/>
            <person name="Kravitz S.A."/>
            <person name="Mouchard L."/>
            <person name="Reinert K."/>
            <person name="Remington K.A."/>
            <person name="Clark A.G."/>
            <person name="Waterman M.S."/>
            <person name="Eichler E.E."/>
            <person name="Adams M.D."/>
            <person name="Hunkapiller M.W."/>
            <person name="Myers E.W."/>
            <person name="Venter J.C."/>
        </authorList>
    </citation>
    <scope>NUCLEOTIDE SEQUENCE [LARGE SCALE GENOMIC DNA]</scope>
</reference>
<reference key="8">
    <citation type="submission" date="2006-12" db="EMBL/GenBank/DDBJ databases">
        <authorList>
            <person name="Mural R.J."/>
            <person name="Istrail S."/>
            <person name="Sutton G.G."/>
            <person name="Florea L."/>
            <person name="Halpern A.L."/>
            <person name="Mobarry C.M."/>
            <person name="Lippert R."/>
            <person name="Walenz B."/>
            <person name="Shatkay H."/>
            <person name="Dew I."/>
            <person name="Miller J.R."/>
            <person name="Flanigan M.J."/>
            <person name="Edwards N.J."/>
            <person name="Bolanos R."/>
            <person name="Fasulo D."/>
            <person name="Halldorsson B.V."/>
            <person name="Hannenhalli S."/>
            <person name="Turner R."/>
            <person name="Yooseph S."/>
            <person name="Lu F."/>
            <person name="Nusskern D.R."/>
            <person name="Shue B.C."/>
            <person name="Zheng X.H."/>
            <person name="Zhong F."/>
            <person name="Delcher A.L."/>
            <person name="Huson D.H."/>
            <person name="Kravitz S.A."/>
            <person name="Mouchard L."/>
            <person name="Reinert K."/>
            <person name="Remington K.A."/>
            <person name="Clark A.G."/>
            <person name="Waterman M.S."/>
            <person name="Eichler E.E."/>
            <person name="Adams M.D."/>
            <person name="Hunkapiller M.W."/>
            <person name="Myers E.W."/>
            <person name="Venter J.C."/>
        </authorList>
    </citation>
    <scope>NUCLEOTIDE SEQUENCE [LARGE SCALE GENOMIC DNA]</scope>
</reference>
<reference key="9">
    <citation type="journal article" date="2004" name="Genome Res.">
        <title>The status, quality, and expansion of the NIH full-length cDNA project: the Mammalian Gene Collection (MGC).</title>
        <authorList>
            <consortium name="The MGC Project Team"/>
        </authorList>
    </citation>
    <scope>NUCLEOTIDE SEQUENCE [LARGE SCALE MRNA] (ISOFORMS 1 AND 3)</scope>
    <source>
        <tissue>Brain</tissue>
        <tissue>Colon</tissue>
        <tissue>Kidney</tissue>
        <tissue>Pancreas</tissue>
        <tissue>Placenta</tissue>
    </source>
</reference>
<reference key="10">
    <citation type="journal article" date="1995" name="Proc. Natl. Acad. Sci. U.S.A.">
        <title>Molecular cloning and characterization of a cellular phosphoprotein that interacts with a conserved C-terminal domain of adenovirus E1A involved in negative modulation of oncogenic transformation.</title>
        <authorList>
            <person name="Schaeper U."/>
            <person name="Boyd J.M."/>
            <person name="Verma S."/>
            <person name="Uhlmann E."/>
            <person name="Subramanian T."/>
            <person name="Chinnadurai G."/>
        </authorList>
    </citation>
    <scope>PROTEIN SEQUENCE OF 263-272</scope>
    <scope>PHOSPHORYLATION</scope>
    <source>
        <tissue>B-cell</tissue>
        <tissue>Cervix carcinoma</tissue>
    </source>
</reference>
<reference key="11">
    <citation type="journal article" date="2004" name="Mol. Cell. Biol.">
        <title>Nuclear speckle-associated protein Pnn/DRS binds to the transcriptional corepressor CtBP and relieves CtBP-mediated repression of the E-cadherin gene.</title>
        <authorList>
            <person name="Alpatov R."/>
            <person name="Munguba G.C."/>
            <person name="Caton P."/>
            <person name="Joo J.H."/>
            <person name="Shi Y."/>
            <person name="Shi Y."/>
            <person name="Hunt M.E."/>
            <person name="Sugrue S.P."/>
        </authorList>
    </citation>
    <scope>INTERACTION WITH PNN</scope>
</reference>
<reference key="12">
    <citation type="journal article" date="2004" name="Nucleic Acids Res.">
        <title>Multiple domains of the receptor-interacting protein 140 contribute to transcription inhibition.</title>
        <authorList>
            <person name="Castet A."/>
            <person name="Boulahtouf A."/>
            <person name="Versini G."/>
            <person name="Bonnet S."/>
            <person name="Augereau P."/>
            <person name="Vignon F."/>
            <person name="Khochbin S."/>
            <person name="Jalaguier S."/>
            <person name="Cavailles V."/>
        </authorList>
    </citation>
    <scope>INTERACTION WITH NRIP1</scope>
</reference>
<reference key="13">
    <citation type="journal article" date="2006" name="J. Biol. Chem.">
        <title>Zinc finger protein Wiz links G9a/GLP histone methyltransferases to the co-repressor molecule CtBP.</title>
        <authorList>
            <person name="Ueda J."/>
            <person name="Tachibana M."/>
            <person name="Ikura T."/>
            <person name="Shinkai Y."/>
        </authorList>
    </citation>
    <scope>INTERACTION WITH WIZ</scope>
</reference>
<reference key="14">
    <citation type="journal article" date="2008" name="Proc. Natl. Acad. Sci. U.S.A.">
        <title>A quantitative atlas of mitotic phosphorylation.</title>
        <authorList>
            <person name="Dephoure N."/>
            <person name="Zhou C."/>
            <person name="Villen J."/>
            <person name="Beausoleil S.A."/>
            <person name="Bakalarski C.E."/>
            <person name="Elledge S.J."/>
            <person name="Gygi S.P."/>
        </authorList>
    </citation>
    <scope>IDENTIFICATION BY MASS SPECTROMETRY [LARGE SCALE ANALYSIS]</scope>
    <source>
        <tissue>Cervix carcinoma</tissue>
    </source>
</reference>
<reference key="15">
    <citation type="journal article" date="2011" name="BMC Syst. Biol.">
        <title>Initial characterization of the human central proteome.</title>
        <authorList>
            <person name="Burkard T.R."/>
            <person name="Planyavsky M."/>
            <person name="Kaupe I."/>
            <person name="Breitwieser F.P."/>
            <person name="Buerckstuemmer T."/>
            <person name="Bennett K.L."/>
            <person name="Superti-Furga G."/>
            <person name="Colinge J."/>
        </authorList>
    </citation>
    <scope>IDENTIFICATION BY MASS SPECTROMETRY [LARGE SCALE ANALYSIS]</scope>
</reference>
<reference key="16">
    <citation type="journal article" date="2013" name="Virology">
        <title>Interaction of CtBP with adenovirus E1A suppresses immortalization of primary epithelial cells and enhances virus replication during productive infection.</title>
        <authorList>
            <person name="Subramanian T."/>
            <person name="Zhao L.J."/>
            <person name="Chinnadurai G."/>
        </authorList>
    </citation>
    <scope>INTERACTION WITH HADV5 E1A (MICROBIAL INFECTION)</scope>
</reference>
<reference key="17">
    <citation type="journal article" date="2014" name="J. Proteomics">
        <title>An enzyme assisted RP-RPLC approach for in-depth analysis of human liver phosphoproteome.</title>
        <authorList>
            <person name="Bian Y."/>
            <person name="Song C."/>
            <person name="Cheng K."/>
            <person name="Dong M."/>
            <person name="Wang F."/>
            <person name="Huang J."/>
            <person name="Sun D."/>
            <person name="Wang L."/>
            <person name="Ye M."/>
            <person name="Zou H."/>
        </authorList>
    </citation>
    <scope>PHOSPHORYLATION [LARGE SCALE ANALYSIS] AT SER-428</scope>
    <scope>IDENTIFICATION BY MASS SPECTROMETRY [LARGE SCALE ANALYSIS]</scope>
    <source>
        <tissue>Liver</tissue>
    </source>
</reference>
<reference key="18">
    <citation type="journal article" date="2014" name="Mol. Cell. Proteomics">
        <title>Immunoaffinity enrichment and mass spectrometry analysis of protein methylation.</title>
        <authorList>
            <person name="Guo A."/>
            <person name="Gu H."/>
            <person name="Zhou J."/>
            <person name="Mulhern D."/>
            <person name="Wang Y."/>
            <person name="Lee K.A."/>
            <person name="Yang V."/>
            <person name="Aguiar M."/>
            <person name="Kornhauser J."/>
            <person name="Jia X."/>
            <person name="Ren J."/>
            <person name="Beausoleil S.A."/>
            <person name="Silva J.C."/>
            <person name="Vemulapalli V."/>
            <person name="Bedford M.T."/>
            <person name="Comb M.J."/>
        </authorList>
    </citation>
    <scope>METHYLATION [LARGE SCALE ANALYSIS] AT ARG-22</scope>
    <scope>IDENTIFICATION BY MASS SPECTROMETRY [LARGE SCALE ANALYSIS]</scope>
    <source>
        <tissue>Colon carcinoma</tissue>
    </source>
</reference>
<reference key="19">
    <citation type="journal article" date="2015" name="Mol. Cell">
        <title>MCRIP1, an ERK substrate, mediates ERK-induced gene silencing during epithelial-mesenchymal transition by regulating the co-repressor CtBP.</title>
        <authorList>
            <person name="Ichikawa K."/>
            <person name="Kubota Y."/>
            <person name="Nakamura T."/>
            <person name="Weng J.S."/>
            <person name="Tomida T."/>
            <person name="Saito H."/>
            <person name="Takekawa M."/>
        </authorList>
    </citation>
    <scope>INTERACTION WITH MCRIP1</scope>
</reference>
<reference key="20">
    <citation type="submission" date="2009-02" db="PDB data bank">
        <title>Crystal structure of human CTBP2 dehydrogenase complexed with NAD(H).</title>
        <authorList>
            <consortium name="Structural genomics consortium (SGC)"/>
        </authorList>
    </citation>
    <scope>X-RAY CRYSTALLOGRAPHY (2.8 ANGSTROMS) OF 31-364 IN COMPLEX WITH NAD</scope>
</reference>
<organism>
    <name type="scientific">Homo sapiens</name>
    <name type="common">Human</name>
    <dbReference type="NCBI Taxonomy" id="9606"/>
    <lineage>
        <taxon>Eukaryota</taxon>
        <taxon>Metazoa</taxon>
        <taxon>Chordata</taxon>
        <taxon>Craniata</taxon>
        <taxon>Vertebrata</taxon>
        <taxon>Euteleostomi</taxon>
        <taxon>Mammalia</taxon>
        <taxon>Eutheria</taxon>
        <taxon>Euarchontoglires</taxon>
        <taxon>Primates</taxon>
        <taxon>Haplorrhini</taxon>
        <taxon>Catarrhini</taxon>
        <taxon>Hominidae</taxon>
        <taxon>Homo</taxon>
    </lineage>
</organism>
<dbReference type="EMBL" id="AF016507">
    <property type="protein sequence ID" value="AAC39603.1"/>
    <property type="molecule type" value="mRNA"/>
</dbReference>
<dbReference type="EMBL" id="AF222711">
    <property type="protein sequence ID" value="AAG45951.1"/>
    <property type="molecule type" value="mRNA"/>
</dbReference>
<dbReference type="EMBL" id="BT007012">
    <property type="protein sequence ID" value="AAP35658.1"/>
    <property type="molecule type" value="mRNA"/>
</dbReference>
<dbReference type="EMBL" id="AK290390">
    <property type="protein sequence ID" value="BAF83079.1"/>
    <property type="molecule type" value="mRNA"/>
</dbReference>
<dbReference type="EMBL" id="AL833398">
    <property type="protein sequence ID" value="CAH10590.1"/>
    <property type="molecule type" value="mRNA"/>
</dbReference>
<dbReference type="EMBL" id="AL596261">
    <property type="status" value="NOT_ANNOTATED_CDS"/>
    <property type="molecule type" value="Genomic_DNA"/>
</dbReference>
<dbReference type="EMBL" id="AL731571">
    <property type="status" value="NOT_ANNOTATED_CDS"/>
    <property type="molecule type" value="Genomic_DNA"/>
</dbReference>
<dbReference type="EMBL" id="CH471066">
    <property type="protein sequence ID" value="EAW49247.1"/>
    <property type="molecule type" value="Genomic_DNA"/>
</dbReference>
<dbReference type="EMBL" id="CH471066">
    <property type="protein sequence ID" value="EAW49250.1"/>
    <property type="molecule type" value="Genomic_DNA"/>
</dbReference>
<dbReference type="EMBL" id="CH471066">
    <property type="protein sequence ID" value="EAW49249.1"/>
    <property type="molecule type" value="Genomic_DNA"/>
</dbReference>
<dbReference type="EMBL" id="BC002486">
    <property type="protein sequence ID" value="AAH02486.1"/>
    <property type="molecule type" value="mRNA"/>
</dbReference>
<dbReference type="EMBL" id="BC037900">
    <property type="protein sequence ID" value="AAH37900.1"/>
    <property type="molecule type" value="mRNA"/>
</dbReference>
<dbReference type="EMBL" id="BC047018">
    <property type="protein sequence ID" value="AAH47018.1"/>
    <property type="molecule type" value="mRNA"/>
</dbReference>
<dbReference type="EMBL" id="BC052276">
    <property type="protein sequence ID" value="AAH52276.1"/>
    <property type="molecule type" value="mRNA"/>
</dbReference>
<dbReference type="EMBL" id="BC072020">
    <property type="protein sequence ID" value="AAH72020.1"/>
    <property type="molecule type" value="mRNA"/>
</dbReference>
<dbReference type="CCDS" id="CCDS7643.1">
    <molecule id="P56545-1"/>
</dbReference>
<dbReference type="CCDS" id="CCDS7644.1">
    <molecule id="P56545-2"/>
</dbReference>
<dbReference type="CCDS" id="CCDS86154.1">
    <molecule id="P56545-3"/>
</dbReference>
<dbReference type="RefSeq" id="NP_001077383.1">
    <molecule id="P56545-1"/>
    <property type="nucleotide sequence ID" value="NM_001083914.3"/>
</dbReference>
<dbReference type="RefSeq" id="NP_001277143.1">
    <molecule id="P56545-1"/>
    <property type="nucleotide sequence ID" value="NM_001290214.3"/>
</dbReference>
<dbReference type="RefSeq" id="NP_001277144.1">
    <molecule id="P56545-1"/>
    <property type="nucleotide sequence ID" value="NM_001290215.3"/>
</dbReference>
<dbReference type="RefSeq" id="NP_001307941.1">
    <molecule id="P56545-1"/>
    <property type="nucleotide sequence ID" value="NM_001321012.2"/>
</dbReference>
<dbReference type="RefSeq" id="NP_001307942.1">
    <molecule id="P56545-1"/>
    <property type="nucleotide sequence ID" value="NM_001321013.2"/>
</dbReference>
<dbReference type="RefSeq" id="NP_001307943.1">
    <molecule id="P56545-1"/>
    <property type="nucleotide sequence ID" value="NM_001321014.2"/>
</dbReference>
<dbReference type="RefSeq" id="NP_001320.1">
    <molecule id="P56545-1"/>
    <property type="nucleotide sequence ID" value="NM_001329.4"/>
</dbReference>
<dbReference type="RefSeq" id="NP_001350437.1">
    <molecule id="P56545-3"/>
    <property type="nucleotide sequence ID" value="NM_001363508.2"/>
</dbReference>
<dbReference type="RefSeq" id="NP_073713.2">
    <molecule id="P56545-2"/>
    <property type="nucleotide sequence ID" value="NM_022802.3"/>
</dbReference>
<dbReference type="RefSeq" id="XP_005269618.1">
    <property type="nucleotide sequence ID" value="XM_005269561.2"/>
</dbReference>
<dbReference type="RefSeq" id="XP_005269621.1">
    <property type="nucleotide sequence ID" value="XM_005269564.2"/>
</dbReference>
<dbReference type="RefSeq" id="XP_005269624.1">
    <molecule id="P56545-1"/>
    <property type="nucleotide sequence ID" value="XM_005269567.4"/>
</dbReference>
<dbReference type="RefSeq" id="XP_005269625.1">
    <property type="nucleotide sequence ID" value="XM_005269568.4"/>
</dbReference>
<dbReference type="RefSeq" id="XP_005269626.1">
    <property type="nucleotide sequence ID" value="XM_005269569.2"/>
</dbReference>
<dbReference type="RefSeq" id="XP_005269628.1">
    <property type="nucleotide sequence ID" value="XM_005269571.2"/>
</dbReference>
<dbReference type="RefSeq" id="XP_005269629.1">
    <property type="nucleotide sequence ID" value="XM_005269572.3"/>
</dbReference>
<dbReference type="RefSeq" id="XP_006717705.1">
    <property type="nucleotide sequence ID" value="XM_006717642.2"/>
</dbReference>
<dbReference type="RefSeq" id="XP_011537651.1">
    <property type="nucleotide sequence ID" value="XM_011539349.2"/>
</dbReference>
<dbReference type="RefSeq" id="XP_011537653.1">
    <property type="nucleotide sequence ID" value="XM_011539351.1"/>
</dbReference>
<dbReference type="RefSeq" id="XP_011537655.1">
    <property type="nucleotide sequence ID" value="XM_011539353.1"/>
</dbReference>
<dbReference type="RefSeq" id="XP_011537656.1">
    <property type="nucleotide sequence ID" value="XM_011539354.1"/>
</dbReference>
<dbReference type="RefSeq" id="XP_011537657.1">
    <molecule id="P56545-1"/>
    <property type="nucleotide sequence ID" value="XM_011539355.3"/>
</dbReference>
<dbReference type="RefSeq" id="XP_016871245.1">
    <property type="nucleotide sequence ID" value="XM_017015756.1"/>
</dbReference>
<dbReference type="RefSeq" id="XP_016871246.1">
    <property type="nucleotide sequence ID" value="XM_017015757.1"/>
</dbReference>
<dbReference type="RefSeq" id="XP_024303598.1">
    <molecule id="P56545-1"/>
    <property type="nucleotide sequence ID" value="XM_024447830.2"/>
</dbReference>
<dbReference type="RefSeq" id="XP_047280620.1">
    <molecule id="P56545-1"/>
    <property type="nucleotide sequence ID" value="XM_047424664.1"/>
</dbReference>
<dbReference type="RefSeq" id="XP_047280621.1">
    <molecule id="P56545-1"/>
    <property type="nucleotide sequence ID" value="XM_047424665.1"/>
</dbReference>
<dbReference type="RefSeq" id="XP_047280622.1">
    <molecule id="P56545-1"/>
    <property type="nucleotide sequence ID" value="XM_047424666.1"/>
</dbReference>
<dbReference type="RefSeq" id="XP_047280623.1">
    <molecule id="P56545-1"/>
    <property type="nucleotide sequence ID" value="XM_047424667.1"/>
</dbReference>
<dbReference type="RefSeq" id="XP_047280624.1">
    <molecule id="P56545-1"/>
    <property type="nucleotide sequence ID" value="XM_047424668.1"/>
</dbReference>
<dbReference type="RefSeq" id="XP_047280625.1">
    <molecule id="P56545-1"/>
    <property type="nucleotide sequence ID" value="XM_047424669.1"/>
</dbReference>
<dbReference type="RefSeq" id="XP_047280626.1">
    <molecule id="P56545-1"/>
    <property type="nucleotide sequence ID" value="XM_047424670.1"/>
</dbReference>
<dbReference type="RefSeq" id="XP_047280627.1">
    <molecule id="P56545-1"/>
    <property type="nucleotide sequence ID" value="XM_047424671.1"/>
</dbReference>
<dbReference type="RefSeq" id="XP_047280628.1">
    <molecule id="P56545-1"/>
    <property type="nucleotide sequence ID" value="XM_047424672.1"/>
</dbReference>
<dbReference type="RefSeq" id="XP_047280629.1">
    <molecule id="P56545-1"/>
    <property type="nucleotide sequence ID" value="XM_047424673.1"/>
</dbReference>
<dbReference type="RefSeq" id="XP_047280630.1">
    <molecule id="P56545-1"/>
    <property type="nucleotide sequence ID" value="XM_047424674.1"/>
</dbReference>
<dbReference type="RefSeq" id="XP_047280631.1">
    <molecule id="P56545-1"/>
    <property type="nucleotide sequence ID" value="XM_047424675.1"/>
</dbReference>
<dbReference type="RefSeq" id="XP_047280632.1">
    <molecule id="P56545-1"/>
    <property type="nucleotide sequence ID" value="XM_047424676.1"/>
</dbReference>
<dbReference type="RefSeq" id="XP_047280633.1">
    <molecule id="P56545-1"/>
    <property type="nucleotide sequence ID" value="XM_047424677.1"/>
</dbReference>
<dbReference type="RefSeq" id="XP_047280634.1">
    <molecule id="P56545-1"/>
    <property type="nucleotide sequence ID" value="XM_047424678.1"/>
</dbReference>
<dbReference type="PDB" id="2OME">
    <property type="method" value="X-ray"/>
    <property type="resolution" value="2.80 A"/>
    <property type="chains" value="A/B/C/D/E/F/G/H=31-364"/>
</dbReference>
<dbReference type="PDB" id="4LCJ">
    <property type="method" value="X-ray"/>
    <property type="resolution" value="2.86 A"/>
    <property type="chains" value="A/B/C/D/E/F/G/H=31-362"/>
</dbReference>
<dbReference type="PDB" id="6WKW">
    <property type="method" value="EM"/>
    <property type="resolution" value="3.60 A"/>
    <property type="chains" value="A/B/C/D=33-362"/>
</dbReference>
<dbReference type="PDB" id="8ATI">
    <property type="method" value="X-ray"/>
    <property type="resolution" value="2.60 A"/>
    <property type="chains" value="A/B/C/D=31-364"/>
</dbReference>
<dbReference type="PDBsum" id="2OME"/>
<dbReference type="PDBsum" id="4LCJ"/>
<dbReference type="PDBsum" id="6WKW"/>
<dbReference type="PDBsum" id="8ATI"/>
<dbReference type="EMDB" id="EMD-11015"/>
<dbReference type="EMDB" id="EMD-21811"/>
<dbReference type="SMR" id="P56545"/>
<dbReference type="BioGRID" id="107870">
    <property type="interactions" value="375"/>
</dbReference>
<dbReference type="CORUM" id="P56545"/>
<dbReference type="DIP" id="DIP-42104N"/>
<dbReference type="FunCoup" id="P56545">
    <property type="interactions" value="1152"/>
</dbReference>
<dbReference type="IntAct" id="P56545">
    <property type="interactions" value="167"/>
</dbReference>
<dbReference type="MINT" id="P56545"/>
<dbReference type="STRING" id="9606.ENSP00000311825"/>
<dbReference type="BindingDB" id="P56545"/>
<dbReference type="ChEMBL" id="CHEMBL3797016"/>
<dbReference type="GlyGen" id="P56545">
    <property type="glycosylation" value="1 site, 1 O-linked glycan (1 site)"/>
</dbReference>
<dbReference type="iPTMnet" id="P56545"/>
<dbReference type="PhosphoSitePlus" id="P56545"/>
<dbReference type="SwissPalm" id="P56545"/>
<dbReference type="BioMuta" id="CTBP2"/>
<dbReference type="DMDM" id="3182976"/>
<dbReference type="jPOST" id="P56545"/>
<dbReference type="MassIVE" id="P56545"/>
<dbReference type="PaxDb" id="9606-ENSP00000311825"/>
<dbReference type="PeptideAtlas" id="P56545"/>
<dbReference type="ProteomicsDB" id="56923">
    <molecule id="P56545-1"/>
</dbReference>
<dbReference type="ProteomicsDB" id="56924">
    <molecule id="P56545-2"/>
</dbReference>
<dbReference type="Pumba" id="P56545"/>
<dbReference type="Antibodypedia" id="19137">
    <property type="antibodies" value="407 antibodies from 38 providers"/>
</dbReference>
<dbReference type="DNASU" id="1488"/>
<dbReference type="Ensembl" id="ENST00000309035.11">
    <molecule id="P56545-2"/>
    <property type="protein sequence ID" value="ENSP00000311825.6"/>
    <property type="gene ID" value="ENSG00000175029.17"/>
</dbReference>
<dbReference type="Ensembl" id="ENST00000334808.10">
    <molecule id="P56545-3"/>
    <property type="protein sequence ID" value="ENSP00000357816.5"/>
    <property type="gene ID" value="ENSG00000175029.17"/>
</dbReference>
<dbReference type="Ensembl" id="ENST00000337195.11">
    <molecule id="P56545-1"/>
    <property type="protein sequence ID" value="ENSP00000338615.5"/>
    <property type="gene ID" value="ENSG00000175029.17"/>
</dbReference>
<dbReference type="Ensembl" id="ENST00000411419.7">
    <molecule id="P56545-1"/>
    <property type="protein sequence ID" value="ENSP00000410474.2"/>
    <property type="gene ID" value="ENSG00000175029.17"/>
</dbReference>
<dbReference type="Ensembl" id="ENST00000494626.6">
    <molecule id="P56545-1"/>
    <property type="protein sequence ID" value="ENSP00000436285.1"/>
    <property type="gene ID" value="ENSG00000175029.17"/>
</dbReference>
<dbReference type="Ensembl" id="ENST00000531469.5">
    <molecule id="P56545-1"/>
    <property type="protein sequence ID" value="ENSP00000434630.1"/>
    <property type="gene ID" value="ENSG00000175029.17"/>
</dbReference>
<dbReference type="GeneID" id="1488"/>
<dbReference type="KEGG" id="hsa:1488"/>
<dbReference type="MANE-Select" id="ENST00000337195.11">
    <property type="protein sequence ID" value="ENSP00000338615.5"/>
    <property type="RefSeq nucleotide sequence ID" value="NM_001329.4"/>
    <property type="RefSeq protein sequence ID" value="NP_001320.1"/>
</dbReference>
<dbReference type="UCSC" id="uc001lie.5">
    <molecule id="P56545-1"/>
    <property type="organism name" value="human"/>
</dbReference>
<dbReference type="AGR" id="HGNC:2495"/>
<dbReference type="CTD" id="1488"/>
<dbReference type="DisGeNET" id="1488"/>
<dbReference type="GeneCards" id="CTBP2"/>
<dbReference type="HGNC" id="HGNC:2495">
    <property type="gene designation" value="CTBP2"/>
</dbReference>
<dbReference type="HPA" id="ENSG00000175029">
    <property type="expression patterns" value="Low tissue specificity"/>
</dbReference>
<dbReference type="MIM" id="602619">
    <property type="type" value="gene"/>
</dbReference>
<dbReference type="neXtProt" id="NX_P56545"/>
<dbReference type="OpenTargets" id="ENSG00000175029"/>
<dbReference type="PharmGKB" id="PA26996"/>
<dbReference type="VEuPathDB" id="HostDB:ENSG00000175029"/>
<dbReference type="eggNOG" id="KOG0067">
    <property type="taxonomic scope" value="Eukaryota"/>
</dbReference>
<dbReference type="GeneTree" id="ENSGT00940000154430"/>
<dbReference type="HOGENOM" id="CLU_019796_1_3_1"/>
<dbReference type="InParanoid" id="P56545"/>
<dbReference type="OMA" id="NHHSQKP"/>
<dbReference type="OrthoDB" id="9991913at2759"/>
<dbReference type="PAN-GO" id="P56545">
    <property type="GO annotations" value="6 GO annotations based on evolutionary models"/>
</dbReference>
<dbReference type="PhylomeDB" id="P56545"/>
<dbReference type="TreeFam" id="TF313593"/>
<dbReference type="PathwayCommons" id="P56545"/>
<dbReference type="Reactome" id="R-HSA-4641265">
    <property type="pathway name" value="Repression of WNT target genes"/>
</dbReference>
<dbReference type="Reactome" id="R-HSA-5339700">
    <property type="pathway name" value="Signaling by TCF7L2 mutants"/>
</dbReference>
<dbReference type="Reactome" id="R-HSA-9662360">
    <molecule id="P56545-2"/>
    <property type="pathway name" value="Sensory processing of sound by inner hair cells of the cochlea"/>
</dbReference>
<dbReference type="SignaLink" id="P56545"/>
<dbReference type="SIGNOR" id="P56545"/>
<dbReference type="BioGRID-ORCS" id="1488">
    <property type="hits" value="145 hits in 1152 CRISPR screens"/>
</dbReference>
<dbReference type="ChiTaRS" id="CTBP2">
    <property type="organism name" value="human"/>
</dbReference>
<dbReference type="EvolutionaryTrace" id="P56545"/>
<dbReference type="GeneWiki" id="CTBP2"/>
<dbReference type="GenomeRNAi" id="1488"/>
<dbReference type="Pharos" id="P56545">
    <property type="development level" value="Tchem"/>
</dbReference>
<dbReference type="PRO" id="PR:P56545"/>
<dbReference type="Proteomes" id="UP000005640">
    <property type="component" value="Chromosome 10"/>
</dbReference>
<dbReference type="RNAct" id="P56545">
    <property type="molecule type" value="protein"/>
</dbReference>
<dbReference type="Bgee" id="ENSG00000175029">
    <property type="expression patterns" value="Expressed in pancreatic ductal cell and 209 other cell types or tissues"/>
</dbReference>
<dbReference type="ExpressionAtlas" id="P56545">
    <property type="expression patterns" value="baseline and differential"/>
</dbReference>
<dbReference type="GO" id="GO:0005634">
    <property type="term" value="C:nucleus"/>
    <property type="evidence" value="ECO:0000314"/>
    <property type="project" value="UniProtKB"/>
</dbReference>
<dbReference type="GO" id="GO:0045202">
    <property type="term" value="C:synapse"/>
    <property type="evidence" value="ECO:0007669"/>
    <property type="project" value="UniProtKB-SubCell"/>
</dbReference>
<dbReference type="GO" id="GO:0017053">
    <property type="term" value="C:transcription repressor complex"/>
    <property type="evidence" value="ECO:0000250"/>
    <property type="project" value="UniProtKB"/>
</dbReference>
<dbReference type="GO" id="GO:0140297">
    <property type="term" value="F:DNA-binding transcription factor binding"/>
    <property type="evidence" value="ECO:0000318"/>
    <property type="project" value="GO_Central"/>
</dbReference>
<dbReference type="GO" id="GO:0042802">
    <property type="term" value="F:identical protein binding"/>
    <property type="evidence" value="ECO:0000353"/>
    <property type="project" value="IntAct"/>
</dbReference>
<dbReference type="GO" id="GO:0051287">
    <property type="term" value="F:NAD binding"/>
    <property type="evidence" value="ECO:0007669"/>
    <property type="project" value="InterPro"/>
</dbReference>
<dbReference type="GO" id="GO:0016616">
    <property type="term" value="F:oxidoreductase activity, acting on the CH-OH group of donors, NAD or NADP as acceptor"/>
    <property type="evidence" value="ECO:0007669"/>
    <property type="project" value="InterPro"/>
</dbReference>
<dbReference type="GO" id="GO:0019901">
    <property type="term" value="F:protein kinase binding"/>
    <property type="evidence" value="ECO:0000353"/>
    <property type="project" value="CAFA"/>
</dbReference>
<dbReference type="GO" id="GO:0044877">
    <property type="term" value="F:protein-containing complex binding"/>
    <property type="evidence" value="ECO:0000353"/>
    <property type="project" value="CAFA"/>
</dbReference>
<dbReference type="GO" id="GO:0003713">
    <property type="term" value="F:transcription coactivator activity"/>
    <property type="evidence" value="ECO:0000318"/>
    <property type="project" value="GO_Central"/>
</dbReference>
<dbReference type="GO" id="GO:0001221">
    <property type="term" value="F:transcription coregulator binding"/>
    <property type="evidence" value="ECO:0000318"/>
    <property type="project" value="GO_Central"/>
</dbReference>
<dbReference type="GO" id="GO:0003714">
    <property type="term" value="F:transcription corepressor activity"/>
    <property type="evidence" value="ECO:0000318"/>
    <property type="project" value="GO_Central"/>
</dbReference>
<dbReference type="GO" id="GO:0001222">
    <property type="term" value="F:transcription corepressor binding"/>
    <property type="evidence" value="ECO:0000353"/>
    <property type="project" value="ARUK-UCL"/>
</dbReference>
<dbReference type="GO" id="GO:0008285">
    <property type="term" value="P:negative regulation of cell population proliferation"/>
    <property type="evidence" value="ECO:0000304"/>
    <property type="project" value="ProtInc"/>
</dbReference>
<dbReference type="GO" id="GO:0045892">
    <property type="term" value="P:negative regulation of DNA-templated transcription"/>
    <property type="evidence" value="ECO:0000250"/>
    <property type="project" value="UniProtKB"/>
</dbReference>
<dbReference type="GO" id="GO:0000122">
    <property type="term" value="P:negative regulation of transcription by RNA polymerase II"/>
    <property type="evidence" value="ECO:0000304"/>
    <property type="project" value="ARUK-UCL"/>
</dbReference>
<dbReference type="GO" id="GO:0048386">
    <property type="term" value="P:positive regulation of retinoic acid receptor signaling pathway"/>
    <property type="evidence" value="ECO:0000315"/>
    <property type="project" value="MGI"/>
</dbReference>
<dbReference type="GO" id="GO:0045944">
    <property type="term" value="P:positive regulation of transcription by RNA polymerase II"/>
    <property type="evidence" value="ECO:0000315"/>
    <property type="project" value="MGI"/>
</dbReference>
<dbReference type="GO" id="GO:0006357">
    <property type="term" value="P:regulation of transcription by RNA polymerase II"/>
    <property type="evidence" value="ECO:0000318"/>
    <property type="project" value="GO_Central"/>
</dbReference>
<dbReference type="GO" id="GO:0019079">
    <property type="term" value="P:viral genome replication"/>
    <property type="evidence" value="ECO:0000304"/>
    <property type="project" value="ProtInc"/>
</dbReference>
<dbReference type="GO" id="GO:0050872">
    <property type="term" value="P:white fat cell differentiation"/>
    <property type="evidence" value="ECO:0000250"/>
    <property type="project" value="UniProtKB"/>
</dbReference>
<dbReference type="CDD" id="cd05299">
    <property type="entry name" value="CtBP_dh"/>
    <property type="match status" value="1"/>
</dbReference>
<dbReference type="FunFam" id="3.40.50.720:FF:001383">
    <property type="entry name" value="C-terminal-binding protein 2"/>
    <property type="match status" value="1"/>
</dbReference>
<dbReference type="Gene3D" id="3.40.50.720">
    <property type="entry name" value="NAD(P)-binding Rossmann-like Domain"/>
    <property type="match status" value="2"/>
</dbReference>
<dbReference type="InterPro" id="IPR043322">
    <property type="entry name" value="CtBP"/>
</dbReference>
<dbReference type="InterPro" id="IPR051638">
    <property type="entry name" value="CTBP_dehydrogenase"/>
</dbReference>
<dbReference type="InterPro" id="IPR006139">
    <property type="entry name" value="D-isomer_2_OHA_DH_cat_dom"/>
</dbReference>
<dbReference type="InterPro" id="IPR029753">
    <property type="entry name" value="D-isomer_DH_CS"/>
</dbReference>
<dbReference type="InterPro" id="IPR006140">
    <property type="entry name" value="D-isomer_DH_NAD-bd"/>
</dbReference>
<dbReference type="InterPro" id="IPR036291">
    <property type="entry name" value="NAD(P)-bd_dom_sf"/>
</dbReference>
<dbReference type="PANTHER" id="PTHR46029">
    <property type="entry name" value="C-TERMINAL-BINDING PROTEIN"/>
    <property type="match status" value="1"/>
</dbReference>
<dbReference type="PANTHER" id="PTHR46029:SF3">
    <property type="entry name" value="C-TERMINAL-BINDING PROTEIN 2"/>
    <property type="match status" value="1"/>
</dbReference>
<dbReference type="Pfam" id="PF00389">
    <property type="entry name" value="2-Hacid_dh"/>
    <property type="match status" value="1"/>
</dbReference>
<dbReference type="Pfam" id="PF02826">
    <property type="entry name" value="2-Hacid_dh_C"/>
    <property type="match status" value="1"/>
</dbReference>
<dbReference type="SUPFAM" id="SSF52283">
    <property type="entry name" value="Formate/glycerate dehydrogenase catalytic domain-like"/>
    <property type="match status" value="1"/>
</dbReference>
<dbReference type="SUPFAM" id="SSF51735">
    <property type="entry name" value="NAD(P)-binding Rossmann-fold domains"/>
    <property type="match status" value="1"/>
</dbReference>
<dbReference type="PROSITE" id="PS00671">
    <property type="entry name" value="D_2_HYDROXYACID_DH_3"/>
    <property type="match status" value="1"/>
</dbReference>
<evidence type="ECO:0000250" key="1"/>
<evidence type="ECO:0000256" key="2">
    <source>
        <dbReference type="SAM" id="MobiDB-lite"/>
    </source>
</evidence>
<evidence type="ECO:0000269" key="3">
    <source>
    </source>
</evidence>
<evidence type="ECO:0000269" key="4">
    <source>
    </source>
</evidence>
<evidence type="ECO:0000269" key="5">
    <source>
    </source>
</evidence>
<evidence type="ECO:0000269" key="6">
    <source>
    </source>
</evidence>
<evidence type="ECO:0000269" key="7">
    <source>
    </source>
</evidence>
<evidence type="ECO:0000269" key="8">
    <source ref="20"/>
</evidence>
<evidence type="ECO:0000303" key="9">
    <source>
    </source>
</evidence>
<evidence type="ECO:0000305" key="10"/>
<evidence type="ECO:0007744" key="11">
    <source>
    </source>
</evidence>
<evidence type="ECO:0007744" key="12">
    <source>
    </source>
</evidence>
<evidence type="ECO:0007829" key="13">
    <source>
        <dbReference type="PDB" id="2OME"/>
    </source>
</evidence>